<reference key="1">
    <citation type="journal article" date="2004" name="Proc. Natl. Acad. Sci. U.S.A.">
        <title>The genome sequence of the probiotic intestinal bacterium Lactobacillus johnsonii NCC 533.</title>
        <authorList>
            <person name="Pridmore R.D."/>
            <person name="Berger B."/>
            <person name="Desiere F."/>
            <person name="Vilanova D."/>
            <person name="Barretto C."/>
            <person name="Pittet A.-C."/>
            <person name="Zwahlen M.-C."/>
            <person name="Rouvet M."/>
            <person name="Altermann E."/>
            <person name="Barrangou R."/>
            <person name="Mollet B."/>
            <person name="Mercenier A."/>
            <person name="Klaenhammer T."/>
            <person name="Arigoni F."/>
            <person name="Schell M.A."/>
        </authorList>
    </citation>
    <scope>NUCLEOTIDE SEQUENCE [LARGE SCALE GENOMIC DNA]</scope>
    <source>
        <strain>CNCM I-1225 / La1 / NCC 533</strain>
    </source>
</reference>
<comment type="function">
    <text evidence="1">Responsible for the release of ribosomes from messenger RNA at the termination of protein biosynthesis. May increase the efficiency of translation by recycling ribosomes from one round of translation to another.</text>
</comment>
<comment type="subcellular location">
    <subcellularLocation>
        <location evidence="1">Cytoplasm</location>
    </subcellularLocation>
</comment>
<comment type="similarity">
    <text evidence="1">Belongs to the RRF family.</text>
</comment>
<accession>P61305</accession>
<dbReference type="EMBL" id="AE017198">
    <property type="protein sequence ID" value="AAS09265.1"/>
    <property type="molecule type" value="Genomic_DNA"/>
</dbReference>
<dbReference type="RefSeq" id="WP_004895267.1">
    <property type="nucleotide sequence ID" value="NC_005362.1"/>
</dbReference>
<dbReference type="SMR" id="P61305"/>
<dbReference type="GeneID" id="83570176"/>
<dbReference type="KEGG" id="ljo:LJ_1497"/>
<dbReference type="eggNOG" id="COG0233">
    <property type="taxonomic scope" value="Bacteria"/>
</dbReference>
<dbReference type="HOGENOM" id="CLU_073981_2_0_9"/>
<dbReference type="Proteomes" id="UP000000581">
    <property type="component" value="Chromosome"/>
</dbReference>
<dbReference type="GO" id="GO:0005737">
    <property type="term" value="C:cytoplasm"/>
    <property type="evidence" value="ECO:0007669"/>
    <property type="project" value="UniProtKB-SubCell"/>
</dbReference>
<dbReference type="GO" id="GO:0043023">
    <property type="term" value="F:ribosomal large subunit binding"/>
    <property type="evidence" value="ECO:0007669"/>
    <property type="project" value="TreeGrafter"/>
</dbReference>
<dbReference type="GO" id="GO:0006415">
    <property type="term" value="P:translational termination"/>
    <property type="evidence" value="ECO:0007669"/>
    <property type="project" value="UniProtKB-UniRule"/>
</dbReference>
<dbReference type="CDD" id="cd00520">
    <property type="entry name" value="RRF"/>
    <property type="match status" value="1"/>
</dbReference>
<dbReference type="FunFam" id="1.10.132.20:FF:000001">
    <property type="entry name" value="Ribosome-recycling factor"/>
    <property type="match status" value="1"/>
</dbReference>
<dbReference type="FunFam" id="3.30.1360.40:FF:000001">
    <property type="entry name" value="Ribosome-recycling factor"/>
    <property type="match status" value="1"/>
</dbReference>
<dbReference type="Gene3D" id="3.30.1360.40">
    <property type="match status" value="1"/>
</dbReference>
<dbReference type="Gene3D" id="1.10.132.20">
    <property type="entry name" value="Ribosome-recycling factor"/>
    <property type="match status" value="1"/>
</dbReference>
<dbReference type="HAMAP" id="MF_00040">
    <property type="entry name" value="RRF"/>
    <property type="match status" value="1"/>
</dbReference>
<dbReference type="InterPro" id="IPR002661">
    <property type="entry name" value="Ribosome_recyc_fac"/>
</dbReference>
<dbReference type="InterPro" id="IPR023584">
    <property type="entry name" value="Ribosome_recyc_fac_dom"/>
</dbReference>
<dbReference type="InterPro" id="IPR036191">
    <property type="entry name" value="RRF_sf"/>
</dbReference>
<dbReference type="NCBIfam" id="TIGR00496">
    <property type="entry name" value="frr"/>
    <property type="match status" value="1"/>
</dbReference>
<dbReference type="PANTHER" id="PTHR20982:SF3">
    <property type="entry name" value="MITOCHONDRIAL RIBOSOME RECYCLING FACTOR PSEUDO 1"/>
    <property type="match status" value="1"/>
</dbReference>
<dbReference type="PANTHER" id="PTHR20982">
    <property type="entry name" value="RIBOSOME RECYCLING FACTOR"/>
    <property type="match status" value="1"/>
</dbReference>
<dbReference type="Pfam" id="PF01765">
    <property type="entry name" value="RRF"/>
    <property type="match status" value="1"/>
</dbReference>
<dbReference type="SUPFAM" id="SSF55194">
    <property type="entry name" value="Ribosome recycling factor, RRF"/>
    <property type="match status" value="1"/>
</dbReference>
<sequence>MANEVIEKAKDNMKKSIAVFQKELGGIRAGVANASLLDGIKVNYYGVPTPLTQMSSVSIPEARVLMVTPYDKSTLDDIEHAILASDLGITPANDGTVIRIVIPQLTGERRQEIAKQVGKLAEKGKIAVRNVRRDAMDTLKRQEKDGDITEDEQRSLEKQVQKVTDDATKEIDKLADQKSQEITQG</sequence>
<organism>
    <name type="scientific">Lactobacillus johnsonii (strain CNCM I-12250 / La1 / NCC 533)</name>
    <dbReference type="NCBI Taxonomy" id="257314"/>
    <lineage>
        <taxon>Bacteria</taxon>
        <taxon>Bacillati</taxon>
        <taxon>Bacillota</taxon>
        <taxon>Bacilli</taxon>
        <taxon>Lactobacillales</taxon>
        <taxon>Lactobacillaceae</taxon>
        <taxon>Lactobacillus</taxon>
    </lineage>
</organism>
<evidence type="ECO:0000255" key="1">
    <source>
        <dbReference type="HAMAP-Rule" id="MF_00040"/>
    </source>
</evidence>
<evidence type="ECO:0000256" key="2">
    <source>
        <dbReference type="SAM" id="MobiDB-lite"/>
    </source>
</evidence>
<feature type="chain" id="PRO_0000167474" description="Ribosome-recycling factor">
    <location>
        <begin position="1"/>
        <end position="185"/>
    </location>
</feature>
<feature type="region of interest" description="Disordered" evidence="2">
    <location>
        <begin position="140"/>
        <end position="166"/>
    </location>
</feature>
<proteinExistence type="inferred from homology"/>
<gene>
    <name evidence="1" type="primary">frr</name>
    <name type="ordered locus">LJ_1497</name>
</gene>
<name>RRF_LACJO</name>
<keyword id="KW-0963">Cytoplasm</keyword>
<keyword id="KW-0648">Protein biosynthesis</keyword>
<protein>
    <recommendedName>
        <fullName evidence="1">Ribosome-recycling factor</fullName>
        <shortName evidence="1">RRF</shortName>
    </recommendedName>
    <alternativeName>
        <fullName evidence="1">Ribosome-releasing factor</fullName>
    </alternativeName>
</protein>